<feature type="chain" id="PRO_0000234810" description="Tyrosine--tRNA ligase 1">
    <location>
        <begin position="1"/>
        <end position="419"/>
    </location>
</feature>
<feature type="domain" description="S4 RNA-binding" evidence="1">
    <location>
        <begin position="353"/>
        <end position="418"/>
    </location>
</feature>
<feature type="short sequence motif" description="'HIGH' region">
    <location>
        <begin position="40"/>
        <end position="49"/>
    </location>
</feature>
<feature type="short sequence motif" description="'KMSKS' region">
    <location>
        <begin position="232"/>
        <end position="236"/>
    </location>
</feature>
<feature type="binding site" evidence="1">
    <location>
        <position position="35"/>
    </location>
    <ligand>
        <name>L-tyrosine</name>
        <dbReference type="ChEBI" id="CHEBI:58315"/>
    </ligand>
</feature>
<feature type="binding site" evidence="1">
    <location>
        <position position="172"/>
    </location>
    <ligand>
        <name>L-tyrosine</name>
        <dbReference type="ChEBI" id="CHEBI:58315"/>
    </ligand>
</feature>
<feature type="binding site" evidence="1">
    <location>
        <position position="176"/>
    </location>
    <ligand>
        <name>L-tyrosine</name>
        <dbReference type="ChEBI" id="CHEBI:58315"/>
    </ligand>
</feature>
<feature type="binding site" evidence="1">
    <location>
        <position position="235"/>
    </location>
    <ligand>
        <name>ATP</name>
        <dbReference type="ChEBI" id="CHEBI:30616"/>
    </ligand>
</feature>
<name>SYY1_VIBPA</name>
<comment type="function">
    <text evidence="1">Catalyzes the attachment of tyrosine to tRNA(Tyr) in a two-step reaction: tyrosine is first activated by ATP to form Tyr-AMP and then transferred to the acceptor end of tRNA(Tyr).</text>
</comment>
<comment type="catalytic activity">
    <reaction evidence="1">
        <text>tRNA(Tyr) + L-tyrosine + ATP = L-tyrosyl-tRNA(Tyr) + AMP + diphosphate + H(+)</text>
        <dbReference type="Rhea" id="RHEA:10220"/>
        <dbReference type="Rhea" id="RHEA-COMP:9706"/>
        <dbReference type="Rhea" id="RHEA-COMP:9707"/>
        <dbReference type="ChEBI" id="CHEBI:15378"/>
        <dbReference type="ChEBI" id="CHEBI:30616"/>
        <dbReference type="ChEBI" id="CHEBI:33019"/>
        <dbReference type="ChEBI" id="CHEBI:58315"/>
        <dbReference type="ChEBI" id="CHEBI:78442"/>
        <dbReference type="ChEBI" id="CHEBI:78536"/>
        <dbReference type="ChEBI" id="CHEBI:456215"/>
        <dbReference type="EC" id="6.1.1.1"/>
    </reaction>
</comment>
<comment type="subunit">
    <text evidence="1">Homodimer.</text>
</comment>
<comment type="subcellular location">
    <subcellularLocation>
        <location evidence="1">Cytoplasm</location>
    </subcellularLocation>
</comment>
<comment type="similarity">
    <text evidence="1">Belongs to the class-I aminoacyl-tRNA synthetase family. TyrS type 1 subfamily.</text>
</comment>
<organism>
    <name type="scientific">Vibrio parahaemolyticus serotype O3:K6 (strain RIMD 2210633)</name>
    <dbReference type="NCBI Taxonomy" id="223926"/>
    <lineage>
        <taxon>Bacteria</taxon>
        <taxon>Pseudomonadati</taxon>
        <taxon>Pseudomonadota</taxon>
        <taxon>Gammaproteobacteria</taxon>
        <taxon>Vibrionales</taxon>
        <taxon>Vibrionaceae</taxon>
        <taxon>Vibrio</taxon>
    </lineage>
</organism>
<protein>
    <recommendedName>
        <fullName evidence="1">Tyrosine--tRNA ligase 1</fullName>
        <ecNumber evidence="1">6.1.1.1</ecNumber>
    </recommendedName>
    <alternativeName>
        <fullName evidence="1">Tyrosyl-tRNA synthetase 1</fullName>
        <shortName evidence="1">TyrRS 1</shortName>
    </alternativeName>
</protein>
<keyword id="KW-0030">Aminoacyl-tRNA synthetase</keyword>
<keyword id="KW-0067">ATP-binding</keyword>
<keyword id="KW-0963">Cytoplasm</keyword>
<keyword id="KW-0436">Ligase</keyword>
<keyword id="KW-0547">Nucleotide-binding</keyword>
<keyword id="KW-0648">Protein biosynthesis</keyword>
<keyword id="KW-0694">RNA-binding</keyword>
<accession>Q87J85</accession>
<evidence type="ECO:0000255" key="1">
    <source>
        <dbReference type="HAMAP-Rule" id="MF_02006"/>
    </source>
</evidence>
<gene>
    <name evidence="1" type="primary">tyrS1</name>
    <name type="ordered locus">VPA0368</name>
</gene>
<proteinExistence type="inferred from homology"/>
<dbReference type="EC" id="6.1.1.1" evidence="1"/>
<dbReference type="EMBL" id="BA000032">
    <property type="protein sequence ID" value="BAC61711.1"/>
    <property type="molecule type" value="Genomic_DNA"/>
</dbReference>
<dbReference type="RefSeq" id="NP_799878.1">
    <property type="nucleotide sequence ID" value="NC_004605.1"/>
</dbReference>
<dbReference type="SMR" id="Q87J85"/>
<dbReference type="GeneID" id="1191056"/>
<dbReference type="KEGG" id="vpa:VPA0368"/>
<dbReference type="PATRIC" id="fig|223926.6.peg.3313"/>
<dbReference type="eggNOG" id="COG0162">
    <property type="taxonomic scope" value="Bacteria"/>
</dbReference>
<dbReference type="HOGENOM" id="CLU_024003_0_3_6"/>
<dbReference type="Proteomes" id="UP000002493">
    <property type="component" value="Chromosome 2"/>
</dbReference>
<dbReference type="GO" id="GO:0005829">
    <property type="term" value="C:cytosol"/>
    <property type="evidence" value="ECO:0007669"/>
    <property type="project" value="TreeGrafter"/>
</dbReference>
<dbReference type="GO" id="GO:0005524">
    <property type="term" value="F:ATP binding"/>
    <property type="evidence" value="ECO:0007669"/>
    <property type="project" value="UniProtKB-UniRule"/>
</dbReference>
<dbReference type="GO" id="GO:0003723">
    <property type="term" value="F:RNA binding"/>
    <property type="evidence" value="ECO:0007669"/>
    <property type="project" value="UniProtKB-KW"/>
</dbReference>
<dbReference type="GO" id="GO:0004831">
    <property type="term" value="F:tyrosine-tRNA ligase activity"/>
    <property type="evidence" value="ECO:0007669"/>
    <property type="project" value="UniProtKB-UniRule"/>
</dbReference>
<dbReference type="GO" id="GO:0006437">
    <property type="term" value="P:tyrosyl-tRNA aminoacylation"/>
    <property type="evidence" value="ECO:0007669"/>
    <property type="project" value="UniProtKB-UniRule"/>
</dbReference>
<dbReference type="CDD" id="cd00165">
    <property type="entry name" value="S4"/>
    <property type="match status" value="1"/>
</dbReference>
<dbReference type="CDD" id="cd00805">
    <property type="entry name" value="TyrRS_core"/>
    <property type="match status" value="1"/>
</dbReference>
<dbReference type="FunFam" id="1.10.240.10:FF:000001">
    <property type="entry name" value="Tyrosine--tRNA ligase"/>
    <property type="match status" value="1"/>
</dbReference>
<dbReference type="FunFam" id="3.40.50.620:FF:000008">
    <property type="entry name" value="Tyrosine--tRNA ligase"/>
    <property type="match status" value="1"/>
</dbReference>
<dbReference type="Gene3D" id="3.40.50.620">
    <property type="entry name" value="HUPs"/>
    <property type="match status" value="1"/>
</dbReference>
<dbReference type="Gene3D" id="3.10.290.10">
    <property type="entry name" value="RNA-binding S4 domain"/>
    <property type="match status" value="1"/>
</dbReference>
<dbReference type="Gene3D" id="1.10.240.10">
    <property type="entry name" value="Tyrosyl-Transfer RNA Synthetase"/>
    <property type="match status" value="1"/>
</dbReference>
<dbReference type="HAMAP" id="MF_02006">
    <property type="entry name" value="Tyr_tRNA_synth_type1"/>
    <property type="match status" value="1"/>
</dbReference>
<dbReference type="InterPro" id="IPR001412">
    <property type="entry name" value="aa-tRNA-synth_I_CS"/>
</dbReference>
<dbReference type="InterPro" id="IPR002305">
    <property type="entry name" value="aa-tRNA-synth_Ic"/>
</dbReference>
<dbReference type="InterPro" id="IPR014729">
    <property type="entry name" value="Rossmann-like_a/b/a_fold"/>
</dbReference>
<dbReference type="InterPro" id="IPR036986">
    <property type="entry name" value="S4_RNA-bd_sf"/>
</dbReference>
<dbReference type="InterPro" id="IPR054608">
    <property type="entry name" value="SYY-like_C"/>
</dbReference>
<dbReference type="InterPro" id="IPR002307">
    <property type="entry name" value="Tyr-tRNA-ligase"/>
</dbReference>
<dbReference type="InterPro" id="IPR024088">
    <property type="entry name" value="Tyr-tRNA-ligase_bac-type"/>
</dbReference>
<dbReference type="InterPro" id="IPR024107">
    <property type="entry name" value="Tyr-tRNA-ligase_bac_1"/>
</dbReference>
<dbReference type="NCBIfam" id="TIGR00234">
    <property type="entry name" value="tyrS"/>
    <property type="match status" value="1"/>
</dbReference>
<dbReference type="PANTHER" id="PTHR11766:SF0">
    <property type="entry name" value="TYROSINE--TRNA LIGASE, MITOCHONDRIAL"/>
    <property type="match status" value="1"/>
</dbReference>
<dbReference type="PANTHER" id="PTHR11766">
    <property type="entry name" value="TYROSYL-TRNA SYNTHETASE"/>
    <property type="match status" value="1"/>
</dbReference>
<dbReference type="Pfam" id="PF22421">
    <property type="entry name" value="SYY_C-terminal"/>
    <property type="match status" value="1"/>
</dbReference>
<dbReference type="Pfam" id="PF00579">
    <property type="entry name" value="tRNA-synt_1b"/>
    <property type="match status" value="1"/>
</dbReference>
<dbReference type="PRINTS" id="PR01040">
    <property type="entry name" value="TRNASYNTHTYR"/>
</dbReference>
<dbReference type="SUPFAM" id="SSF55174">
    <property type="entry name" value="Alpha-L RNA-binding motif"/>
    <property type="match status" value="1"/>
</dbReference>
<dbReference type="SUPFAM" id="SSF52374">
    <property type="entry name" value="Nucleotidylyl transferase"/>
    <property type="match status" value="1"/>
</dbReference>
<dbReference type="PROSITE" id="PS00178">
    <property type="entry name" value="AA_TRNA_LIGASE_I"/>
    <property type="match status" value="1"/>
</dbReference>
<dbReference type="PROSITE" id="PS50889">
    <property type="entry name" value="S4"/>
    <property type="match status" value="1"/>
</dbReference>
<sequence length="419" mass="46667">MTTPLLQDLQDRGLIAQASDLEEIQTLLSQPQTVYCGFDPTAGSLHIGHLVPLIMLKRFQDAGHQAVALIGGATGMIGDPSFKATERSLNSAEIVSGWVNDLSNQIQQLMNHQLSKPMIMVNNADWMRAINVIDFFRDVGKHFSINTMINRESVKQRLQRPDQGISFTEFSYALLQSYDFAELNRQYGCRLQIGGNDQWGNIVSGIDLTRRQNGEQVFGLTLPLITKSDGTKFGKTEGGAVWLDPSKTSPYAFYQFWLGAEDADVYHFLRYYTFLSCEEIASIEAQDQASQGKPQAQRILAEEMTRFVHGEEGLASAERITQALFSGNVQQLSLGELKQLELDGLPSIESAQQDLVELLIESGLASSKRVAREHISNNAISVNGEKVSADNPSLSFPLFDQYWLLQRGKKHFCLVKRAA</sequence>
<reference key="1">
    <citation type="journal article" date="2003" name="Lancet">
        <title>Genome sequence of Vibrio parahaemolyticus: a pathogenic mechanism distinct from that of V. cholerae.</title>
        <authorList>
            <person name="Makino K."/>
            <person name="Oshima K."/>
            <person name="Kurokawa K."/>
            <person name="Yokoyama K."/>
            <person name="Uda T."/>
            <person name="Tagomori K."/>
            <person name="Iijima Y."/>
            <person name="Najima M."/>
            <person name="Nakano M."/>
            <person name="Yamashita A."/>
            <person name="Kubota Y."/>
            <person name="Kimura S."/>
            <person name="Yasunaga T."/>
            <person name="Honda T."/>
            <person name="Shinagawa H."/>
            <person name="Hattori M."/>
            <person name="Iida T."/>
        </authorList>
    </citation>
    <scope>NUCLEOTIDE SEQUENCE [LARGE SCALE GENOMIC DNA]</scope>
    <source>
        <strain>RIMD 2210633</strain>
    </source>
</reference>